<reference key="1">
    <citation type="journal article" date="2005" name="Nature">
        <title>The genome of the social amoeba Dictyostelium discoideum.</title>
        <authorList>
            <person name="Eichinger L."/>
            <person name="Pachebat J.A."/>
            <person name="Gloeckner G."/>
            <person name="Rajandream M.A."/>
            <person name="Sucgang R."/>
            <person name="Berriman M."/>
            <person name="Song J."/>
            <person name="Olsen R."/>
            <person name="Szafranski K."/>
            <person name="Xu Q."/>
            <person name="Tunggal B."/>
            <person name="Kummerfeld S."/>
            <person name="Madera M."/>
            <person name="Konfortov B.A."/>
            <person name="Rivero F."/>
            <person name="Bankier A.T."/>
            <person name="Lehmann R."/>
            <person name="Hamlin N."/>
            <person name="Davies R."/>
            <person name="Gaudet P."/>
            <person name="Fey P."/>
            <person name="Pilcher K."/>
            <person name="Chen G."/>
            <person name="Saunders D."/>
            <person name="Sodergren E.J."/>
            <person name="Davis P."/>
            <person name="Kerhornou A."/>
            <person name="Nie X."/>
            <person name="Hall N."/>
            <person name="Anjard C."/>
            <person name="Hemphill L."/>
            <person name="Bason N."/>
            <person name="Farbrother P."/>
            <person name="Desany B."/>
            <person name="Just E."/>
            <person name="Morio T."/>
            <person name="Rost R."/>
            <person name="Churcher C.M."/>
            <person name="Cooper J."/>
            <person name="Haydock S."/>
            <person name="van Driessche N."/>
            <person name="Cronin A."/>
            <person name="Goodhead I."/>
            <person name="Muzny D.M."/>
            <person name="Mourier T."/>
            <person name="Pain A."/>
            <person name="Lu M."/>
            <person name="Harper D."/>
            <person name="Lindsay R."/>
            <person name="Hauser H."/>
            <person name="James K.D."/>
            <person name="Quiles M."/>
            <person name="Madan Babu M."/>
            <person name="Saito T."/>
            <person name="Buchrieser C."/>
            <person name="Wardroper A."/>
            <person name="Felder M."/>
            <person name="Thangavelu M."/>
            <person name="Johnson D."/>
            <person name="Knights A."/>
            <person name="Loulseged H."/>
            <person name="Mungall K.L."/>
            <person name="Oliver K."/>
            <person name="Price C."/>
            <person name="Quail M.A."/>
            <person name="Urushihara H."/>
            <person name="Hernandez J."/>
            <person name="Rabbinowitsch E."/>
            <person name="Steffen D."/>
            <person name="Sanders M."/>
            <person name="Ma J."/>
            <person name="Kohara Y."/>
            <person name="Sharp S."/>
            <person name="Simmonds M.N."/>
            <person name="Spiegler S."/>
            <person name="Tivey A."/>
            <person name="Sugano S."/>
            <person name="White B."/>
            <person name="Walker D."/>
            <person name="Woodward J.R."/>
            <person name="Winckler T."/>
            <person name="Tanaka Y."/>
            <person name="Shaulsky G."/>
            <person name="Schleicher M."/>
            <person name="Weinstock G.M."/>
            <person name="Rosenthal A."/>
            <person name="Cox E.C."/>
            <person name="Chisholm R.L."/>
            <person name="Gibbs R.A."/>
            <person name="Loomis W.F."/>
            <person name="Platzer M."/>
            <person name="Kay R.R."/>
            <person name="Williams J.G."/>
            <person name="Dear P.H."/>
            <person name="Noegel A.A."/>
            <person name="Barrell B.G."/>
            <person name="Kuspa A."/>
        </authorList>
    </citation>
    <scope>NUCLEOTIDE SEQUENCE [LARGE SCALE GENOMIC DNA]</scope>
    <source>
        <strain>AX4</strain>
    </source>
</reference>
<reference key="2">
    <citation type="journal article" date="2008" name="Nucleic Acids Res.">
        <title>Comparative genomics supports a deep evolutionary origin for the large, four-module transcriptional mediator complex.</title>
        <authorList>
            <person name="Bourbon H.-M."/>
        </authorList>
    </citation>
    <scope>NOMENCLATURE</scope>
</reference>
<proteinExistence type="inferred from homology"/>
<protein>
    <recommendedName>
        <fullName>Putative mediator of RNA polymerase II transcription subunit 15</fullName>
    </recommendedName>
    <alternativeName>
        <fullName>Putative mediator complex subunit 15</fullName>
    </alternativeName>
</protein>
<comment type="function">
    <text evidence="1">Component of the Mediator complex, a coactivator involved in the regulated transcription of nearly all RNA polymerase II-dependent genes. Mediator functions as a bridge to convey information from gene-specific regulatory proteins to the basal RNA polymerase II transcription machinery. Mediator is recruited to promoters by direct interactions with regulatory proteins and serves as a scaffold for the assembly of a functional preinitiation complex with RNA polymerase II and the general transcription factors (By similarity).</text>
</comment>
<comment type="subunit">
    <text evidence="1">Component of the Mediator complex.</text>
</comment>
<comment type="subcellular location">
    <subcellularLocation>
        <location>Cytoplasm</location>
    </subcellularLocation>
    <subcellularLocation>
        <location evidence="1">Nucleus</location>
    </subcellularLocation>
</comment>
<comment type="similarity">
    <text evidence="4">Belongs to the Mediator complex subunit 15 family.</text>
</comment>
<organism>
    <name type="scientific">Dictyostelium discoideum</name>
    <name type="common">Social amoeba</name>
    <dbReference type="NCBI Taxonomy" id="44689"/>
    <lineage>
        <taxon>Eukaryota</taxon>
        <taxon>Amoebozoa</taxon>
        <taxon>Evosea</taxon>
        <taxon>Eumycetozoa</taxon>
        <taxon>Dictyostelia</taxon>
        <taxon>Dictyosteliales</taxon>
        <taxon>Dictyosteliaceae</taxon>
        <taxon>Dictyostelium</taxon>
    </lineage>
</organism>
<evidence type="ECO:0000250" key="1"/>
<evidence type="ECO:0000255" key="2"/>
<evidence type="ECO:0000256" key="3">
    <source>
        <dbReference type="SAM" id="MobiDB-lite"/>
    </source>
</evidence>
<evidence type="ECO:0000305" key="4"/>
<dbReference type="EMBL" id="AAFI02000224">
    <property type="protein sequence ID" value="EAL60456.1"/>
    <property type="molecule type" value="Genomic_DNA"/>
</dbReference>
<dbReference type="RefSeq" id="XP_628870.1">
    <property type="nucleotide sequence ID" value="XM_628868.1"/>
</dbReference>
<dbReference type="FunCoup" id="Q54B46">
    <property type="interactions" value="243"/>
</dbReference>
<dbReference type="STRING" id="44689.Q54B46"/>
<dbReference type="GlyGen" id="Q54B46">
    <property type="glycosylation" value="1 site"/>
</dbReference>
<dbReference type="PaxDb" id="44689-DDB0266901"/>
<dbReference type="EnsemblProtists" id="EAL60456">
    <property type="protein sequence ID" value="EAL60456"/>
    <property type="gene ID" value="DDB_G0293914"/>
</dbReference>
<dbReference type="GeneID" id="8629486"/>
<dbReference type="KEGG" id="ddi:DDB_G0293914"/>
<dbReference type="dictyBase" id="DDB_G0293914">
    <property type="gene designation" value="med15"/>
</dbReference>
<dbReference type="VEuPathDB" id="AmoebaDB:DDB_G0293914"/>
<dbReference type="eggNOG" id="ENOG502RSSW">
    <property type="taxonomic scope" value="Eukaryota"/>
</dbReference>
<dbReference type="HOGENOM" id="CLU_335390_0_0_1"/>
<dbReference type="InParanoid" id="Q54B46"/>
<dbReference type="OMA" id="WFKNPAL"/>
<dbReference type="PRO" id="PR:Q54B46"/>
<dbReference type="Proteomes" id="UP000002195">
    <property type="component" value="Chromosome 6"/>
</dbReference>
<dbReference type="GO" id="GO:0005737">
    <property type="term" value="C:cytoplasm"/>
    <property type="evidence" value="ECO:0007669"/>
    <property type="project" value="UniProtKB-SubCell"/>
</dbReference>
<dbReference type="GO" id="GO:0005634">
    <property type="term" value="C:nucleus"/>
    <property type="evidence" value="ECO:0007669"/>
    <property type="project" value="UniProtKB-SubCell"/>
</dbReference>
<dbReference type="GO" id="GO:0004402">
    <property type="term" value="F:histone acetyltransferase activity"/>
    <property type="evidence" value="ECO:0000318"/>
    <property type="project" value="GO_Central"/>
</dbReference>
<dbReference type="GO" id="GO:0006366">
    <property type="term" value="P:transcription by RNA polymerase II"/>
    <property type="evidence" value="ECO:0000250"/>
    <property type="project" value="dictyBase"/>
</dbReference>
<dbReference type="PANTHER" id="PTHR20916:SF12">
    <property type="entry name" value="ANCESTRAL COATOMER ELEMENT 1 SEC16_SEC31 DOMAIN-CONTAINING PROTEIN-RELATED"/>
    <property type="match status" value="1"/>
</dbReference>
<dbReference type="PANTHER" id="PTHR20916">
    <property type="entry name" value="CYSTEINE AND GLYCINE-RICH PROTEIN 2 BINDING PROTEIN"/>
    <property type="match status" value="1"/>
</dbReference>
<feature type="chain" id="PRO_0000388654" description="Putative mediator of RNA polymerase II transcription subunit 15">
    <location>
        <begin position="1"/>
        <end position="851"/>
    </location>
</feature>
<feature type="region of interest" description="Disordered" evidence="3">
    <location>
        <begin position="79"/>
        <end position="212"/>
    </location>
</feature>
<feature type="region of interest" description="Disordered" evidence="3">
    <location>
        <begin position="299"/>
        <end position="368"/>
    </location>
</feature>
<feature type="coiled-coil region" evidence="2">
    <location>
        <begin position="231"/>
        <end position="307"/>
    </location>
</feature>
<feature type="coiled-coil region" evidence="2">
    <location>
        <begin position="790"/>
        <end position="827"/>
    </location>
</feature>
<feature type="compositionally biased region" description="Low complexity" evidence="3">
    <location>
        <begin position="98"/>
        <end position="141"/>
    </location>
</feature>
<feature type="compositionally biased region" description="Polar residues" evidence="3">
    <location>
        <begin position="145"/>
        <end position="154"/>
    </location>
</feature>
<feature type="compositionally biased region" description="Low complexity" evidence="3">
    <location>
        <begin position="155"/>
        <end position="212"/>
    </location>
</feature>
<feature type="compositionally biased region" description="Polar residues" evidence="3">
    <location>
        <begin position="308"/>
        <end position="319"/>
    </location>
</feature>
<feature type="compositionally biased region" description="Low complexity" evidence="3">
    <location>
        <begin position="320"/>
        <end position="358"/>
    </location>
</feature>
<feature type="compositionally biased region" description="Polar residues" evidence="3">
    <location>
        <begin position="359"/>
        <end position="368"/>
    </location>
</feature>
<name>MED15_DICDI</name>
<gene>
    <name type="primary">med15</name>
    <name type="ORF">DDB_G0293914</name>
</gene>
<sequence length="851" mass="98453">MTDWKTTITPEERNGNSIKILDFLMQWYPNFNRAEALVRANTLEDRIFNTPGIISKNDYIERIAKKIYAIGESLEAKKAQAGMTNNPQTPNPMPTTPITPLIQQPITPVQQQVPPQKQPQPVYNQQQNQQQNQNQYTTTYPSPNTPQQSNTPPISNNNSNNNSNNNLNNNNNNNINNNNNNNNNNNNNNNNNNNNNNNNNNNNNNNNNNTVYAQPLTPQQQIQQQQHQQHQLYLQQQQQLQRLAQQNQQQQPTIMQQVQNQQPTQQQQQQQQQQQQQQQQQQLNQQQINQIKQQQQQQQQQQQQHQQPVQMPSGVTTNKQSPQPQNTPLTPQQQQQLLAAQQSHAQAQANQNQQLQNPKRISSTNNTHLMPCLPSTLYPTATQQDINNMYWERVSSIKKYIPEIEAIIPKIIENFSQSQNQQPQKVETYKKKFLDFVQMVKVTPETVVPPLNLDELTNAERYLMNMYLSSLSEEEQFKKILGTIDDRSNDNLIHFEKDLLNAFERTKRYFSDTFLNKTGGVTSKAPSILWFKNPALNNPFTSATKCQFSDPIVPKKKQHILLDSWTPEFKKIKKGNYEIFEKDQKIYNNLKKDLIDFTKNDNTLLPAKFIDKDTIIISETINGGDGGNNLYIHFNQCQFSTSWKGSKKNPAMFVCSSPNIQISSDGELFSIQPLCGLSWDRAEIIIKHYKQSLNRGDLISKELSQVISLNRYTIESHLDLENAKFFIQFSTKSTLLLKSKKQQQQQQDEKINNNNNNFYNLSILLEVPNNYPYSPISYSFPPEYQLTPYLKDLESKMNKEFENSNDLNQLNNNINNNNNNNNSFSDNTQLPTNQSIVESLKIFEKVLKDLV</sequence>
<accession>Q54B46</accession>
<keyword id="KW-0010">Activator</keyword>
<keyword id="KW-0175">Coiled coil</keyword>
<keyword id="KW-0963">Cytoplasm</keyword>
<keyword id="KW-0539">Nucleus</keyword>
<keyword id="KW-1185">Reference proteome</keyword>
<keyword id="KW-0804">Transcription</keyword>
<keyword id="KW-0805">Transcription regulation</keyword>